<evidence type="ECO:0000250" key="1"/>
<evidence type="ECO:0000255" key="2"/>
<evidence type="ECO:0000255" key="3">
    <source>
        <dbReference type="PROSITE-ProRule" id="PRU00722"/>
    </source>
</evidence>
<evidence type="ECO:0000305" key="4"/>
<comment type="function">
    <text evidence="1">Putative acid-stable proteinase inhibitor.</text>
</comment>
<comment type="subcellular location">
    <subcellularLocation>
        <location evidence="4">Secreted</location>
    </subcellularLocation>
</comment>
<name>WFDC5_AOTNA</name>
<gene>
    <name type="primary">WFDC5</name>
</gene>
<reference key="1">
    <citation type="journal article" date="2007" name="Genome Res.">
        <title>Comparative sequence analyses reveal rapid and divergent evolutionary changes of the WFDC locus in the primate lineage.</title>
        <authorList>
            <consortium name="NISC comparative sequencing program"/>
            <person name="Hurle B."/>
            <person name="Swanson W."/>
            <person name="Green E.D."/>
        </authorList>
    </citation>
    <scope>NUCLEOTIDE SEQUENCE [GENOMIC DNA]</scope>
</reference>
<feature type="signal peptide" evidence="2">
    <location>
        <begin position="1"/>
        <end position="24"/>
    </location>
</feature>
<feature type="chain" id="PRO_0000289633" description="WAP four-disulfide core domain protein 5">
    <location>
        <begin position="25"/>
        <end position="123"/>
    </location>
</feature>
<feature type="domain" description="WAP 1" evidence="3">
    <location>
        <begin position="27"/>
        <end position="73"/>
    </location>
</feature>
<feature type="domain" description="WAP 2" evidence="3">
    <location>
        <begin position="74"/>
        <end position="121"/>
    </location>
</feature>
<feature type="disulfide bond" evidence="3">
    <location>
        <begin position="34"/>
        <end position="62"/>
    </location>
</feature>
<feature type="disulfide bond" evidence="3">
    <location>
        <begin position="41"/>
        <end position="66"/>
    </location>
</feature>
<feature type="disulfide bond" evidence="3">
    <location>
        <begin position="49"/>
        <end position="61"/>
    </location>
</feature>
<feature type="disulfide bond" evidence="3">
    <location>
        <begin position="55"/>
        <end position="70"/>
    </location>
</feature>
<feature type="disulfide bond" evidence="3">
    <location>
        <begin position="81"/>
        <end position="109"/>
    </location>
</feature>
<feature type="disulfide bond" evidence="3">
    <location>
        <begin position="88"/>
        <end position="113"/>
    </location>
</feature>
<feature type="disulfide bond" evidence="3">
    <location>
        <begin position="96"/>
        <end position="108"/>
    </location>
</feature>
<feature type="disulfide bond" evidence="3">
    <location>
        <begin position="102"/>
        <end position="117"/>
    </location>
</feature>
<organism>
    <name type="scientific">Aotus nancymaae</name>
    <name type="common">Ma's night monkey</name>
    <dbReference type="NCBI Taxonomy" id="37293"/>
    <lineage>
        <taxon>Eukaryota</taxon>
        <taxon>Metazoa</taxon>
        <taxon>Chordata</taxon>
        <taxon>Craniata</taxon>
        <taxon>Vertebrata</taxon>
        <taxon>Euteleostomi</taxon>
        <taxon>Mammalia</taxon>
        <taxon>Eutheria</taxon>
        <taxon>Euarchontoglires</taxon>
        <taxon>Primates</taxon>
        <taxon>Haplorrhini</taxon>
        <taxon>Platyrrhini</taxon>
        <taxon>Aotidae</taxon>
        <taxon>Aotus</taxon>
    </lineage>
</organism>
<sequence>MRIQSLLLLGALLAVGSQPPAAFGRKKGEKPGACPPDDGPCLLSVPDQCMEDRQCPLTRKCCYRACFRQCVPRVSVKLGSCPEDQLRCLSPMNHLCHKDADCSGKKRCCSSACGRDCRDPVRG</sequence>
<protein>
    <recommendedName>
        <fullName>WAP four-disulfide core domain protein 5</fullName>
    </recommendedName>
</protein>
<keyword id="KW-1015">Disulfide bond</keyword>
<keyword id="KW-0646">Protease inhibitor</keyword>
<keyword id="KW-1185">Reference proteome</keyword>
<keyword id="KW-0677">Repeat</keyword>
<keyword id="KW-0964">Secreted</keyword>
<keyword id="KW-0722">Serine protease inhibitor</keyword>
<keyword id="KW-0732">Signal</keyword>
<proteinExistence type="inferred from homology"/>
<accession>A4K2W7</accession>
<dbReference type="EMBL" id="DP000046">
    <property type="protein sequence ID" value="ABO53002.1"/>
    <property type="molecule type" value="Genomic_DNA"/>
</dbReference>
<dbReference type="RefSeq" id="XP_012322690.1">
    <property type="nucleotide sequence ID" value="XM_012467267.2"/>
</dbReference>
<dbReference type="SMR" id="A4K2W7"/>
<dbReference type="STRING" id="37293.ENSANAP00000010728"/>
<dbReference type="GeneID" id="105727445"/>
<dbReference type="KEGG" id="anan:105727445"/>
<dbReference type="CTD" id="149708"/>
<dbReference type="OrthoDB" id="4473401at2759"/>
<dbReference type="Proteomes" id="UP000233020">
    <property type="component" value="Whole Genome Shotgun Assembly"/>
</dbReference>
<dbReference type="GO" id="GO:0005615">
    <property type="term" value="C:extracellular space"/>
    <property type="evidence" value="ECO:0007669"/>
    <property type="project" value="TreeGrafter"/>
</dbReference>
<dbReference type="GO" id="GO:0004867">
    <property type="term" value="F:serine-type endopeptidase inhibitor activity"/>
    <property type="evidence" value="ECO:0007669"/>
    <property type="project" value="UniProtKB-KW"/>
</dbReference>
<dbReference type="GO" id="GO:0019731">
    <property type="term" value="P:antibacterial humoral response"/>
    <property type="evidence" value="ECO:0007669"/>
    <property type="project" value="TreeGrafter"/>
</dbReference>
<dbReference type="GO" id="GO:0045087">
    <property type="term" value="P:innate immune response"/>
    <property type="evidence" value="ECO:0007669"/>
    <property type="project" value="TreeGrafter"/>
</dbReference>
<dbReference type="Gene3D" id="4.10.75.10">
    <property type="entry name" value="Elafin-like"/>
    <property type="match status" value="2"/>
</dbReference>
<dbReference type="InterPro" id="IPR036645">
    <property type="entry name" value="Elafin-like_sf"/>
</dbReference>
<dbReference type="InterPro" id="IPR008197">
    <property type="entry name" value="WAP_dom"/>
</dbReference>
<dbReference type="InterPro" id="IPR050514">
    <property type="entry name" value="WAP_four-disulfide_core"/>
</dbReference>
<dbReference type="PANTHER" id="PTHR19441:SF39">
    <property type="entry name" value="WAP FOUR-DISULFIDE CORE DOMAIN PROTEIN 5"/>
    <property type="match status" value="1"/>
</dbReference>
<dbReference type="PANTHER" id="PTHR19441">
    <property type="entry name" value="WHEY ACDIC PROTEIN WAP"/>
    <property type="match status" value="1"/>
</dbReference>
<dbReference type="Pfam" id="PF00095">
    <property type="entry name" value="WAP"/>
    <property type="match status" value="2"/>
</dbReference>
<dbReference type="PRINTS" id="PR00003">
    <property type="entry name" value="4DISULPHCORE"/>
</dbReference>
<dbReference type="SMART" id="SM00217">
    <property type="entry name" value="WAP"/>
    <property type="match status" value="2"/>
</dbReference>
<dbReference type="SUPFAM" id="SSF57256">
    <property type="entry name" value="Elafin-like"/>
    <property type="match status" value="2"/>
</dbReference>
<dbReference type="PROSITE" id="PS51390">
    <property type="entry name" value="WAP"/>
    <property type="match status" value="2"/>
</dbReference>